<gene>
    <name evidence="1" type="primary">rlmC</name>
    <name type="synonym">rumB</name>
    <name type="ordered locus">YPA_0626</name>
</gene>
<dbReference type="EC" id="2.1.1.189" evidence="1"/>
<dbReference type="EMBL" id="CP000308">
    <property type="protein sequence ID" value="ABG12594.1"/>
    <property type="molecule type" value="Genomic_DNA"/>
</dbReference>
<dbReference type="RefSeq" id="WP_002208756.1">
    <property type="nucleotide sequence ID" value="NZ_CP009906.1"/>
</dbReference>
<dbReference type="SMR" id="Q1CAC8"/>
<dbReference type="GeneID" id="57977467"/>
<dbReference type="KEGG" id="ypa:YPA_0626"/>
<dbReference type="Proteomes" id="UP000001971">
    <property type="component" value="Chromosome"/>
</dbReference>
<dbReference type="GO" id="GO:0051539">
    <property type="term" value="F:4 iron, 4 sulfur cluster binding"/>
    <property type="evidence" value="ECO:0007669"/>
    <property type="project" value="UniProtKB-KW"/>
</dbReference>
<dbReference type="GO" id="GO:0005506">
    <property type="term" value="F:iron ion binding"/>
    <property type="evidence" value="ECO:0007669"/>
    <property type="project" value="UniProtKB-UniRule"/>
</dbReference>
<dbReference type="GO" id="GO:0070041">
    <property type="term" value="F:rRNA (uridine-C5-)-methyltransferase activity"/>
    <property type="evidence" value="ECO:0007669"/>
    <property type="project" value="UniProtKB-UniRule"/>
</dbReference>
<dbReference type="GO" id="GO:0070475">
    <property type="term" value="P:rRNA base methylation"/>
    <property type="evidence" value="ECO:0007669"/>
    <property type="project" value="TreeGrafter"/>
</dbReference>
<dbReference type="CDD" id="cd02440">
    <property type="entry name" value="AdoMet_MTases"/>
    <property type="match status" value="1"/>
</dbReference>
<dbReference type="FunFam" id="2.40.50.1070:FF:000002">
    <property type="entry name" value="23S rRNA (uracil(747)-C(5))-methyltransferase RlmC"/>
    <property type="match status" value="1"/>
</dbReference>
<dbReference type="Gene3D" id="2.40.50.1070">
    <property type="match status" value="1"/>
</dbReference>
<dbReference type="Gene3D" id="3.40.50.150">
    <property type="entry name" value="Vaccinia Virus protein VP39"/>
    <property type="match status" value="1"/>
</dbReference>
<dbReference type="HAMAP" id="MF_01012">
    <property type="entry name" value="23SrRNA_methyltr_RlmC"/>
    <property type="match status" value="1"/>
</dbReference>
<dbReference type="InterPro" id="IPR011825">
    <property type="entry name" value="23SrRNA_MeTrfase_RlmC"/>
</dbReference>
<dbReference type="InterPro" id="IPR030390">
    <property type="entry name" value="MeTrfase_TrmA_AS"/>
</dbReference>
<dbReference type="InterPro" id="IPR030391">
    <property type="entry name" value="MeTrfase_TrmA_CS"/>
</dbReference>
<dbReference type="InterPro" id="IPR029063">
    <property type="entry name" value="SAM-dependent_MTases_sf"/>
</dbReference>
<dbReference type="InterPro" id="IPR010280">
    <property type="entry name" value="U5_MeTrfase_fam"/>
</dbReference>
<dbReference type="NCBIfam" id="TIGR02085">
    <property type="entry name" value="meth_trns_rumB"/>
    <property type="match status" value="1"/>
</dbReference>
<dbReference type="NCBIfam" id="TIGR00479">
    <property type="entry name" value="rumA"/>
    <property type="match status" value="1"/>
</dbReference>
<dbReference type="PANTHER" id="PTHR11061">
    <property type="entry name" value="RNA M5U METHYLTRANSFERASE"/>
    <property type="match status" value="1"/>
</dbReference>
<dbReference type="PANTHER" id="PTHR11061:SF30">
    <property type="entry name" value="TRNA (URACIL(54)-C(5))-METHYLTRANSFERASE"/>
    <property type="match status" value="1"/>
</dbReference>
<dbReference type="Pfam" id="PF05958">
    <property type="entry name" value="tRNA_U5-meth_tr"/>
    <property type="match status" value="1"/>
</dbReference>
<dbReference type="SUPFAM" id="SSF53335">
    <property type="entry name" value="S-adenosyl-L-methionine-dependent methyltransferases"/>
    <property type="match status" value="1"/>
</dbReference>
<dbReference type="PROSITE" id="PS51687">
    <property type="entry name" value="SAM_MT_RNA_M5U"/>
    <property type="match status" value="1"/>
</dbReference>
<dbReference type="PROSITE" id="PS01230">
    <property type="entry name" value="TRMA_1"/>
    <property type="match status" value="1"/>
</dbReference>
<dbReference type="PROSITE" id="PS01231">
    <property type="entry name" value="TRMA_2"/>
    <property type="match status" value="1"/>
</dbReference>
<organism>
    <name type="scientific">Yersinia pestis bv. Antiqua (strain Antiqua)</name>
    <dbReference type="NCBI Taxonomy" id="360102"/>
    <lineage>
        <taxon>Bacteria</taxon>
        <taxon>Pseudomonadati</taxon>
        <taxon>Pseudomonadota</taxon>
        <taxon>Gammaproteobacteria</taxon>
        <taxon>Enterobacterales</taxon>
        <taxon>Yersiniaceae</taxon>
        <taxon>Yersinia</taxon>
    </lineage>
</organism>
<comment type="function">
    <text evidence="1">Catalyzes the formation of 5-methyl-uridine at position 747 (m5U747) in 23S rRNA.</text>
</comment>
<comment type="catalytic activity">
    <reaction evidence="1">
        <text>uridine(747) in 23S rRNA + S-adenosyl-L-methionine = 5-methyluridine(747) in 23S rRNA + S-adenosyl-L-homocysteine + H(+)</text>
        <dbReference type="Rhea" id="RHEA:42628"/>
        <dbReference type="Rhea" id="RHEA-COMP:10154"/>
        <dbReference type="Rhea" id="RHEA-COMP:10155"/>
        <dbReference type="ChEBI" id="CHEBI:15378"/>
        <dbReference type="ChEBI" id="CHEBI:57856"/>
        <dbReference type="ChEBI" id="CHEBI:59789"/>
        <dbReference type="ChEBI" id="CHEBI:65315"/>
        <dbReference type="ChEBI" id="CHEBI:74447"/>
        <dbReference type="EC" id="2.1.1.189"/>
    </reaction>
</comment>
<comment type="similarity">
    <text evidence="1">Belongs to the class I-like SAM-binding methyltransferase superfamily. RNA M5U methyltransferase family. RlmC subfamily.</text>
</comment>
<reference key="1">
    <citation type="journal article" date="2006" name="J. Bacteriol.">
        <title>Complete genome sequence of Yersinia pestis strains Antiqua and Nepal516: evidence of gene reduction in an emerging pathogen.</title>
        <authorList>
            <person name="Chain P.S.G."/>
            <person name="Hu P."/>
            <person name="Malfatti S.A."/>
            <person name="Radnedge L."/>
            <person name="Larimer F."/>
            <person name="Vergez L.M."/>
            <person name="Worsham P."/>
            <person name="Chu M.C."/>
            <person name="Andersen G.L."/>
        </authorList>
    </citation>
    <scope>NUCLEOTIDE SEQUENCE [LARGE SCALE GENOMIC DNA]</scope>
    <source>
        <strain>Antiqua</strain>
    </source>
</reference>
<protein>
    <recommendedName>
        <fullName evidence="1">23S rRNA (uracil(747)-C(5))-methyltransferase RlmC</fullName>
        <ecNumber evidence="1">2.1.1.189</ecNumber>
    </recommendedName>
    <alternativeName>
        <fullName evidence="1">23S rRNA(m5U747)-methyltransferase</fullName>
    </alternativeName>
</protein>
<proteinExistence type="inferred from homology"/>
<accession>Q1CAC8</accession>
<evidence type="ECO:0000255" key="1">
    <source>
        <dbReference type="HAMAP-Rule" id="MF_01012"/>
    </source>
</evidence>
<feature type="chain" id="PRO_0000282022" description="23S rRNA (uracil(747)-C(5))-methyltransferase RlmC">
    <location>
        <begin position="1"/>
        <end position="376"/>
    </location>
</feature>
<feature type="active site" description="Nucleophile" evidence="1">
    <location>
        <position position="334"/>
    </location>
</feature>
<feature type="binding site" evidence="1">
    <location>
        <position position="3"/>
    </location>
    <ligand>
        <name>[4Fe-4S] cluster</name>
        <dbReference type="ChEBI" id="CHEBI:49883"/>
    </ligand>
</feature>
<feature type="binding site" evidence="1">
    <location>
        <position position="11"/>
    </location>
    <ligand>
        <name>[4Fe-4S] cluster</name>
        <dbReference type="ChEBI" id="CHEBI:49883"/>
    </ligand>
</feature>
<feature type="binding site" evidence="1">
    <location>
        <position position="14"/>
    </location>
    <ligand>
        <name>[4Fe-4S] cluster</name>
        <dbReference type="ChEBI" id="CHEBI:49883"/>
    </ligand>
</feature>
<feature type="binding site" evidence="1">
    <location>
        <position position="87"/>
    </location>
    <ligand>
        <name>[4Fe-4S] cluster</name>
        <dbReference type="ChEBI" id="CHEBI:49883"/>
    </ligand>
</feature>
<feature type="binding site" evidence="1">
    <location>
        <position position="212"/>
    </location>
    <ligand>
        <name>S-adenosyl-L-methionine</name>
        <dbReference type="ChEBI" id="CHEBI:59789"/>
    </ligand>
</feature>
<feature type="binding site" evidence="1">
    <location>
        <position position="241"/>
    </location>
    <ligand>
        <name>S-adenosyl-L-methionine</name>
        <dbReference type="ChEBI" id="CHEBI:59789"/>
    </ligand>
</feature>
<feature type="binding site" evidence="1">
    <location>
        <position position="262"/>
    </location>
    <ligand>
        <name>S-adenosyl-L-methionine</name>
        <dbReference type="ChEBI" id="CHEBI:59789"/>
    </ligand>
</feature>
<feature type="binding site" evidence="1">
    <location>
        <position position="307"/>
    </location>
    <ligand>
        <name>S-adenosyl-L-methionine</name>
        <dbReference type="ChEBI" id="CHEBI:59789"/>
    </ligand>
</feature>
<name>RLMC_YERPA</name>
<sequence length="376" mass="42202">MHCAQYTAGRCRSCQWLDKPYPQQLADKQHHLESLLAGHAVTQWLAPVFGRESAFRNKAKMVVSGSVERPLLGMLHRDGTPVDLCACPLYPPSFEPVFTVLKTFIARAGLTPYNVARKRGELKFLLLTESTYNGELMLRFVLRSETKLAQLIAALPWLQQQLPQLAVISANIQPVHMAILEGEREIPLTEQQALPERFNQVPLYIRPQSFFQTNPQVAASLYATARQWVQEHEVHSMWDLFCGVGGFGLHCAGPETQLTGIEINAEAIACARQSAEQLGLKNVSFAALDSTRFATAEAQIPELVLVNPPRRGIGRELCDYLSQMAPKFILYSSCNAETMAKDISLLAGYHIERVQLFDMFPHTSHYEVLTLLTLRR</sequence>
<keyword id="KW-0004">4Fe-4S</keyword>
<keyword id="KW-0408">Iron</keyword>
<keyword id="KW-0411">Iron-sulfur</keyword>
<keyword id="KW-0479">Metal-binding</keyword>
<keyword id="KW-0489">Methyltransferase</keyword>
<keyword id="KW-0698">rRNA processing</keyword>
<keyword id="KW-0949">S-adenosyl-L-methionine</keyword>
<keyword id="KW-0808">Transferase</keyword>